<name>YVNF_AZOCH</name>
<accession>P24423</accession>
<dbReference type="EMBL" id="X51756">
    <property type="protein sequence ID" value="CAA36057.1"/>
    <property type="molecule type" value="Genomic_DNA"/>
</dbReference>
<dbReference type="PIR" id="S14694">
    <property type="entry name" value="S14694"/>
</dbReference>
<dbReference type="InterPro" id="IPR018631">
    <property type="entry name" value="AAA-ATPase-like_dom"/>
</dbReference>
<dbReference type="InterPro" id="IPR012547">
    <property type="entry name" value="PDDEXK_9"/>
</dbReference>
<dbReference type="PANTHER" id="PTHR34825:SF1">
    <property type="entry name" value="AAA-ATPASE-LIKE DOMAIN-CONTAINING PROTEIN"/>
    <property type="match status" value="1"/>
</dbReference>
<dbReference type="PANTHER" id="PTHR34825">
    <property type="entry name" value="CONSERVED PROTEIN, WITH A WEAK D-GALACTARATE DEHYDRATASE/ALTRONATE HYDROLASE DOMAIN"/>
    <property type="match status" value="1"/>
</dbReference>
<dbReference type="Pfam" id="PF09820">
    <property type="entry name" value="AAA-ATPase_like"/>
    <property type="match status" value="1"/>
</dbReference>
<dbReference type="Pfam" id="PF08011">
    <property type="entry name" value="PDDEXK_9"/>
    <property type="match status" value="1"/>
</dbReference>
<sequence>MSRKKLPIGIQTFAKIREGDDYYYVDKTGFALQLIEQGTHYFLSRPRRFGKSLFLDTLAELFAGNEPLFRGLQVHDRWDWSRRHPVLRISFGGGVIRDAQDLEGKIAELLTINEQALGIACTQRENRARFGELIRQAHAAGGERVVVLVDEYDKPILDNLTRPEIAREIRDGLRNLYSVIKDSDAHVRFAMLSGVSKFSKVSLFSGLNNLDDISVDSRYSALCGYTETDVDAVFAPELPGLDRDEIRAWYNGYNWTGEAVYNPFDLLLLFQKREFRPYWFETGTPTFLVDLLTERRAFTPALEQVMATDALLSAFEVGDISTEALMFQAGYLTIGQVQRIGAQPRYRLRYPNLEVKASLNEALLLRYLPEPASVMRQTGQLYDLLLANDFPGLQTLFTAFFASIPHDWYRNNPIARYEGYYASVFYSHFAALGLDVRLEDATSHGRIDMTVLFNGHVYLFEFKVVELTPAGQALQQLKDKGYADKYRARGEPIHLLGVEFSRDSRSVVGFVVESLG</sequence>
<proteinExistence type="predicted"/>
<feature type="chain" id="PRO_0000066547" description="Uncharacterized protein in vnfD 5'region">
    <location>
        <begin position="1"/>
        <end position="516"/>
    </location>
</feature>
<organism>
    <name type="scientific">Azotobacter chroococcum mcd 1</name>
    <dbReference type="NCBI Taxonomy" id="355"/>
    <lineage>
        <taxon>Bacteria</taxon>
        <taxon>Pseudomonadati</taxon>
        <taxon>Pseudomonadota</taxon>
        <taxon>Gammaproteobacteria</taxon>
        <taxon>Pseudomonadales</taxon>
        <taxon>Pseudomonadaceae</taxon>
        <taxon>Azotobacter</taxon>
    </lineage>
</organism>
<reference key="1">
    <citation type="journal article" date="1990" name="Nucleic Acids Res.">
        <title>Completed sequence of the region encoding the structural genes for the vanadium nitrogenase of Azotobacter chroococcum.</title>
        <authorList>
            <person name="Fallik E."/>
            <person name="Robson R.L."/>
        </authorList>
    </citation>
    <scope>NUCLEOTIDE SEQUENCE [GENOMIC DNA]</scope>
</reference>
<protein>
    <recommendedName>
        <fullName>Uncharacterized protein in vnfD 5'region</fullName>
    </recommendedName>
</protein>